<gene>
    <name evidence="1" type="primary">atpG</name>
    <name type="ordered locus">NGK_2625</name>
</gene>
<protein>
    <recommendedName>
        <fullName evidence="1">ATP synthase gamma chain</fullName>
    </recommendedName>
    <alternativeName>
        <fullName evidence="1">ATP synthase F1 sector gamma subunit</fullName>
    </alternativeName>
    <alternativeName>
        <fullName evidence="1">F-ATPase gamma subunit</fullName>
    </alternativeName>
</protein>
<sequence length="291" mass="32504">MAVGKEILTKIRSVQNTQKITKAMQMVSTSKMRKTQERMRLARPYAEKVRMVMSHLAQTNTDHGIPLLESHREIRRVGFILITSDKGLCGGLNANVLKKFLAQVQEYRNQGIEEEIVCLGSKGLMACQSIGLNVVASAVNLGDTPKMEMLLGPLTELFQRYEKHEIDKIHLVYSGFVNTMRQEPRMEVLLPIGENVIGDSAPKPPFSWEYRYEPTALAVLEYLVRRYLESVVYQALSDNMASEQAARMVAMKAATDNAGNAIKELRLVYNKSRQAAITTELSEIVAGAAAV</sequence>
<dbReference type="EMBL" id="CP001050">
    <property type="protein sequence ID" value="ACF31224.1"/>
    <property type="molecule type" value="Genomic_DNA"/>
</dbReference>
<dbReference type="RefSeq" id="WP_003690449.1">
    <property type="nucleotide sequence ID" value="NC_011035.1"/>
</dbReference>
<dbReference type="SMR" id="B4RJF9"/>
<dbReference type="GeneID" id="66754478"/>
<dbReference type="KEGG" id="ngk:NGK_2625"/>
<dbReference type="HOGENOM" id="CLU_050669_0_1_4"/>
<dbReference type="Proteomes" id="UP000002564">
    <property type="component" value="Chromosome"/>
</dbReference>
<dbReference type="GO" id="GO:0005886">
    <property type="term" value="C:plasma membrane"/>
    <property type="evidence" value="ECO:0007669"/>
    <property type="project" value="UniProtKB-SubCell"/>
</dbReference>
<dbReference type="GO" id="GO:0045259">
    <property type="term" value="C:proton-transporting ATP synthase complex"/>
    <property type="evidence" value="ECO:0007669"/>
    <property type="project" value="UniProtKB-KW"/>
</dbReference>
<dbReference type="GO" id="GO:0005524">
    <property type="term" value="F:ATP binding"/>
    <property type="evidence" value="ECO:0007669"/>
    <property type="project" value="UniProtKB-UniRule"/>
</dbReference>
<dbReference type="GO" id="GO:0046933">
    <property type="term" value="F:proton-transporting ATP synthase activity, rotational mechanism"/>
    <property type="evidence" value="ECO:0007669"/>
    <property type="project" value="UniProtKB-UniRule"/>
</dbReference>
<dbReference type="GO" id="GO:0042777">
    <property type="term" value="P:proton motive force-driven plasma membrane ATP synthesis"/>
    <property type="evidence" value="ECO:0007669"/>
    <property type="project" value="UniProtKB-UniRule"/>
</dbReference>
<dbReference type="CDD" id="cd12151">
    <property type="entry name" value="F1-ATPase_gamma"/>
    <property type="match status" value="1"/>
</dbReference>
<dbReference type="FunFam" id="1.10.287.80:FF:000005">
    <property type="entry name" value="ATP synthase gamma chain"/>
    <property type="match status" value="1"/>
</dbReference>
<dbReference type="Gene3D" id="3.40.1380.10">
    <property type="match status" value="1"/>
</dbReference>
<dbReference type="Gene3D" id="1.10.287.80">
    <property type="entry name" value="ATP synthase, gamma subunit, helix hairpin domain"/>
    <property type="match status" value="1"/>
</dbReference>
<dbReference type="HAMAP" id="MF_00815">
    <property type="entry name" value="ATP_synth_gamma_bact"/>
    <property type="match status" value="1"/>
</dbReference>
<dbReference type="InterPro" id="IPR035968">
    <property type="entry name" value="ATP_synth_F1_ATPase_gsu"/>
</dbReference>
<dbReference type="InterPro" id="IPR000131">
    <property type="entry name" value="ATP_synth_F1_gsu"/>
</dbReference>
<dbReference type="InterPro" id="IPR023632">
    <property type="entry name" value="ATP_synth_F1_gsu_CS"/>
</dbReference>
<dbReference type="NCBIfam" id="TIGR01146">
    <property type="entry name" value="ATPsyn_F1gamma"/>
    <property type="match status" value="1"/>
</dbReference>
<dbReference type="NCBIfam" id="NF004144">
    <property type="entry name" value="PRK05621.1-1"/>
    <property type="match status" value="1"/>
</dbReference>
<dbReference type="PANTHER" id="PTHR11693">
    <property type="entry name" value="ATP SYNTHASE GAMMA CHAIN"/>
    <property type="match status" value="1"/>
</dbReference>
<dbReference type="PANTHER" id="PTHR11693:SF22">
    <property type="entry name" value="ATP SYNTHASE SUBUNIT GAMMA, MITOCHONDRIAL"/>
    <property type="match status" value="1"/>
</dbReference>
<dbReference type="Pfam" id="PF00231">
    <property type="entry name" value="ATP-synt"/>
    <property type="match status" value="1"/>
</dbReference>
<dbReference type="PRINTS" id="PR00126">
    <property type="entry name" value="ATPASEGAMMA"/>
</dbReference>
<dbReference type="SUPFAM" id="SSF52943">
    <property type="entry name" value="ATP synthase (F1-ATPase), gamma subunit"/>
    <property type="match status" value="1"/>
</dbReference>
<dbReference type="PROSITE" id="PS00153">
    <property type="entry name" value="ATPASE_GAMMA"/>
    <property type="match status" value="1"/>
</dbReference>
<keyword id="KW-0066">ATP synthesis</keyword>
<keyword id="KW-0997">Cell inner membrane</keyword>
<keyword id="KW-1003">Cell membrane</keyword>
<keyword id="KW-0139">CF(1)</keyword>
<keyword id="KW-0375">Hydrogen ion transport</keyword>
<keyword id="KW-0406">Ion transport</keyword>
<keyword id="KW-0472">Membrane</keyword>
<keyword id="KW-0813">Transport</keyword>
<feature type="chain" id="PRO_1000134182" description="ATP synthase gamma chain">
    <location>
        <begin position="1"/>
        <end position="291"/>
    </location>
</feature>
<organism>
    <name type="scientific">Neisseria gonorrhoeae (strain NCCP11945)</name>
    <dbReference type="NCBI Taxonomy" id="521006"/>
    <lineage>
        <taxon>Bacteria</taxon>
        <taxon>Pseudomonadati</taxon>
        <taxon>Pseudomonadota</taxon>
        <taxon>Betaproteobacteria</taxon>
        <taxon>Neisseriales</taxon>
        <taxon>Neisseriaceae</taxon>
        <taxon>Neisseria</taxon>
    </lineage>
</organism>
<comment type="function">
    <text evidence="1">Produces ATP from ADP in the presence of a proton gradient across the membrane. The gamma chain is believed to be important in regulating ATPase activity and the flow of protons through the CF(0) complex.</text>
</comment>
<comment type="subunit">
    <text evidence="1">F-type ATPases have 2 components, CF(1) - the catalytic core - and CF(0) - the membrane proton channel. CF(1) has five subunits: alpha(3), beta(3), gamma(1), delta(1), epsilon(1). CF(0) has three main subunits: a, b and c.</text>
</comment>
<comment type="subcellular location">
    <subcellularLocation>
        <location evidence="1">Cell inner membrane</location>
        <topology evidence="1">Peripheral membrane protein</topology>
    </subcellularLocation>
</comment>
<comment type="similarity">
    <text evidence="1">Belongs to the ATPase gamma chain family.</text>
</comment>
<proteinExistence type="inferred from homology"/>
<reference key="1">
    <citation type="journal article" date="2008" name="J. Bacteriol.">
        <title>Complete genome sequence of Neisseria gonorrhoeae NCCP11945.</title>
        <authorList>
            <person name="Chung G.T."/>
            <person name="Yoo J.S."/>
            <person name="Oh H.B."/>
            <person name="Lee Y.S."/>
            <person name="Cha S.H."/>
            <person name="Kim S.J."/>
            <person name="Yoo C.K."/>
        </authorList>
    </citation>
    <scope>NUCLEOTIDE SEQUENCE [LARGE SCALE GENOMIC DNA]</scope>
    <source>
        <strain>NCCP11945</strain>
    </source>
</reference>
<accession>B4RJF9</accession>
<name>ATPG_NEIG2</name>
<evidence type="ECO:0000255" key="1">
    <source>
        <dbReference type="HAMAP-Rule" id="MF_00815"/>
    </source>
</evidence>